<proteinExistence type="evidence at protein level"/>
<name>PLSB_ECOLI</name>
<organism>
    <name type="scientific">Escherichia coli (strain K12)</name>
    <dbReference type="NCBI Taxonomy" id="83333"/>
    <lineage>
        <taxon>Bacteria</taxon>
        <taxon>Pseudomonadati</taxon>
        <taxon>Pseudomonadota</taxon>
        <taxon>Gammaproteobacteria</taxon>
        <taxon>Enterobacterales</taxon>
        <taxon>Enterobacteriaceae</taxon>
        <taxon>Escherichia</taxon>
    </lineage>
</organism>
<comment type="function">
    <text evidence="4 6">Catalyzes the transfer of an acyl group from acyl-ACP to glycerol-3-phosphate (G3P) to form lysophosphatidic acid (LPA). This enzyme can utilize either acyl-CoA or acyl-ACP as the fatty acyl donor.</text>
</comment>
<comment type="catalytic activity">
    <reaction evidence="2">
        <text>sn-glycerol 3-phosphate + an acyl-CoA = a 1-acyl-sn-glycero-3-phosphate + CoA</text>
        <dbReference type="Rhea" id="RHEA:15325"/>
        <dbReference type="ChEBI" id="CHEBI:57287"/>
        <dbReference type="ChEBI" id="CHEBI:57597"/>
        <dbReference type="ChEBI" id="CHEBI:57970"/>
        <dbReference type="ChEBI" id="CHEBI:58342"/>
        <dbReference type="EC" id="2.3.1.15"/>
    </reaction>
</comment>
<comment type="catalytic activity">
    <reaction evidence="2">
        <text>sn-glycerol 3-phosphate + hexadecanoyl-CoA = 1-hexadecanoyl-sn-glycero-3-phosphate + CoA</text>
        <dbReference type="Rhea" id="RHEA:35723"/>
        <dbReference type="ChEBI" id="CHEBI:57287"/>
        <dbReference type="ChEBI" id="CHEBI:57379"/>
        <dbReference type="ChEBI" id="CHEBI:57518"/>
        <dbReference type="ChEBI" id="CHEBI:57597"/>
    </reaction>
    <physiologicalReaction direction="left-to-right" evidence="2">
        <dbReference type="Rhea" id="RHEA:35724"/>
    </physiologicalReaction>
</comment>
<comment type="biophysicochemical properties">
    <kinetics>
        <KM evidence="2 7">49 uM for glycerol-3-phosphate</KM>
        <Vmax evidence="2 7">13.1 nmol/min/mg enzyme with glycerol-3-phosphate as substrate</Vmax>
    </kinetics>
    <phDependence>
        <text evidence="2 7">Optimum pH is 8.5.</text>
    </phDependence>
</comment>
<comment type="pathway">
    <text>Phospholipid metabolism; CDP-diacylglycerol biosynthesis; CDP-diacylglycerol from sn-glycerol 3-phosphate: step 1/3.</text>
</comment>
<comment type="subunit">
    <text evidence="3">Interacts with ACP, YbgC and PssA, forming altogether a complex at the inner membrane.</text>
</comment>
<comment type="interaction">
    <interactant intactId="EBI-542961">
        <id>P0A7A7</id>
    </interactant>
    <interactant intactId="EBI-542566">
        <id>P0A6A8</id>
        <label>acpP</label>
    </interactant>
    <organismsDiffer>false</organismsDiffer>
    <experiments>3</experiments>
</comment>
<comment type="interaction">
    <interactant intactId="EBI-542961">
        <id>P0A7A7</id>
    </interactant>
    <interactant intactId="EBI-543276">
        <id>P0A8Z3</id>
        <label>ybgC</label>
    </interactant>
    <organismsDiffer>false</organismsDiffer>
    <experiments>3</experiments>
</comment>
<comment type="subcellular location">
    <subcellularLocation>
        <location evidence="3 5">Cell inner membrane</location>
        <topology evidence="3 5">Peripheral membrane protein</topology>
        <orientation evidence="3 5">Cytoplasmic side</orientation>
    </subcellularLocation>
</comment>
<comment type="domain">
    <text>The HXXXXD motif is essential for acyltransferase activity and may constitute the binding site for the phosphate moiety of the glycerol-3-phosphate.</text>
</comment>
<comment type="similarity">
    <text evidence="9">Belongs to the GPAT/DAPAT family.</text>
</comment>
<comment type="sequence caution" evidence="9">
    <conflict type="erroneous initiation">
        <sequence resource="EMBL-CDS" id="AAC43135"/>
    </conflict>
    <text>Extended N-terminus.</text>
</comment>
<reference key="1">
    <citation type="journal article" date="1983" name="J. Biol. Chem.">
        <title>The DNA sequences encoding plsB and dgk loci of Escherichia coli.</title>
        <authorList>
            <person name="Lightner V.A."/>
            <person name="Bell R.M."/>
            <person name="Modrich P."/>
        </authorList>
    </citation>
    <scope>NUCLEOTIDE SEQUENCE [GENOMIC DNA]</scope>
</reference>
<reference key="2">
    <citation type="journal article" date="1999" name="J. Bacteriol.">
        <title>A missense mutation accounts for the defect in the glycerol-3-phosphate acyltransferase expressed in the plsB26 mutant.</title>
        <authorList>
            <person name="Heath R.J."/>
            <person name="Rock C.O."/>
        </authorList>
    </citation>
    <scope>NUCLEOTIDE SEQUENCE [GENOMIC DNA]</scope>
    <scope>MUTAGENESIS OF ALA-349</scope>
    <source>
        <strain>K12</strain>
    </source>
</reference>
<reference key="3">
    <citation type="journal article" date="1993" name="Nucleic Acids Res.">
        <title>Analysis of the Escherichia coli genome. IV. DNA sequence of the region from 89.2 to 92.8 minutes.</title>
        <authorList>
            <person name="Blattner F.R."/>
            <person name="Burland V.D."/>
            <person name="Plunkett G. III"/>
            <person name="Sofia H.J."/>
            <person name="Daniels D.L."/>
        </authorList>
    </citation>
    <scope>NUCLEOTIDE SEQUENCE [LARGE SCALE GENOMIC DNA]</scope>
    <source>
        <strain>K12 / MG1655 / ATCC 47076</strain>
    </source>
</reference>
<reference key="4">
    <citation type="journal article" date="1997" name="Science">
        <title>The complete genome sequence of Escherichia coli K-12.</title>
        <authorList>
            <person name="Blattner F.R."/>
            <person name="Plunkett G. III"/>
            <person name="Bloch C.A."/>
            <person name="Perna N.T."/>
            <person name="Burland V."/>
            <person name="Riley M."/>
            <person name="Collado-Vides J."/>
            <person name="Glasner J.D."/>
            <person name="Rode C.K."/>
            <person name="Mayhew G.F."/>
            <person name="Gregor J."/>
            <person name="Davis N.W."/>
            <person name="Kirkpatrick H.A."/>
            <person name="Goeden M.A."/>
            <person name="Rose D.J."/>
            <person name="Mau B."/>
            <person name="Shao Y."/>
        </authorList>
    </citation>
    <scope>NUCLEOTIDE SEQUENCE [LARGE SCALE GENOMIC DNA]</scope>
    <source>
        <strain>K12 / MG1655 / ATCC 47076</strain>
    </source>
</reference>
<reference key="5">
    <citation type="journal article" date="2006" name="Mol. Syst. Biol.">
        <title>Highly accurate genome sequences of Escherichia coli K-12 strains MG1655 and W3110.</title>
        <authorList>
            <person name="Hayashi K."/>
            <person name="Morooka N."/>
            <person name="Yamamoto Y."/>
            <person name="Fujita K."/>
            <person name="Isono K."/>
            <person name="Choi S."/>
            <person name="Ohtsubo E."/>
            <person name="Baba T."/>
            <person name="Wanner B.L."/>
            <person name="Mori H."/>
            <person name="Horiuchi T."/>
        </authorList>
    </citation>
    <scope>NUCLEOTIDE SEQUENCE [LARGE SCALE GENOMIC DNA]</scope>
    <source>
        <strain>K12 / W3110 / ATCC 27325 / DSM 5911</strain>
    </source>
</reference>
<reference key="6">
    <citation type="journal article" date="1992" name="J. Bacteriol.">
        <title>Cloning and sequencing of Escherichia coli ubiC and purification of chorismate lyase.</title>
        <authorList>
            <person name="Nichols B.P."/>
            <person name="Green J.M."/>
        </authorList>
    </citation>
    <scope>NUCLEOTIDE SEQUENCE [GENOMIC DNA] OF 781-807</scope>
    <source>
        <strain>K12</strain>
    </source>
</reference>
<reference key="7">
    <citation type="journal article" date="1983" name="J. Biol. Chem.">
        <title>Partial NH2- and COOH-terminal sequence and cyanogen bromide peptide analysis of Escherichia coli sn-glycerol-3-phosphate acyltransferase.</title>
        <authorList>
            <person name="Green P.R."/>
            <person name="Vanaman T.C."/>
            <person name="Modrich P."/>
            <person name="Bell R.M."/>
        </authorList>
    </citation>
    <scope>PARTIAL PROTEIN SEQUENCE</scope>
</reference>
<reference key="8">
    <citation type="journal article" date="1971" name="Biochim. Biophys. Acta">
        <title>Distribution of phospholipid-synthesizing enzymes in the wall and membrane subfractions of the envelope of Escherichia coli.</title>
        <authorList>
            <person name="White D.A."/>
            <person name="Albright F.R."/>
            <person name="Lennarz W.J."/>
            <person name="Schnaitman C.A."/>
        </authorList>
    </citation>
    <scope>SUBCELLULAR LOCATION</scope>
</reference>
<reference key="9">
    <citation type="journal article" date="1980" name="J. Biol. Chem.">
        <title>Membrane phospholipid synthesis in Escherichia coli. Cloning of a structural gene (plsB) of the sn-glycerol-3-phosphate acyl/transferase.</title>
        <authorList>
            <person name="Lightner V.A."/>
            <person name="Larson T.J."/>
            <person name="Tailleur P."/>
            <person name="Kantor G.D."/>
            <person name="Raetz C.R."/>
            <person name="Bell R.M."/>
            <person name="Modrich P."/>
        </authorList>
    </citation>
    <scope>IDENTIFICATION</scope>
    <source>
        <strain>K12</strain>
    </source>
</reference>
<reference key="10">
    <citation type="journal article" date="1980" name="J. Biol. Chem.">
        <title>Membrane phospholipid synthesis in Escherichia coli. Identification of the sn-glycerol-3-phosphate acyltransferase polypeptide as the plsB gene product.</title>
        <authorList>
            <person name="Larson T.J."/>
            <person name="Lightner V.A."/>
            <person name="Green P.R."/>
            <person name="Modrich P."/>
            <person name="Bell R.M."/>
        </authorList>
    </citation>
    <scope>FUNCTION</scope>
    <source>
        <strain>K12</strain>
    </source>
</reference>
<reference key="11">
    <citation type="journal article" date="1981" name="J. Biol. Chem.">
        <title>Membrane phospholipid synthesis in Escherichia coli. Purification, reconstitution, and characterization of sn-glycerol-3-phosphate acyltransferase.</title>
        <authorList>
            <person name="Green P.R."/>
            <person name="Merrill A.H. Jr."/>
            <person name="Bell R.M."/>
        </authorList>
    </citation>
    <scope>BIOPHYSICOCHEMICAL PROPERTIES</scope>
    <scope>FATTY ACYL DONOR SPECIFICITY</scope>
</reference>
<reference key="12">
    <citation type="journal article" date="1998" name="J. Bacteriol.">
        <title>A conserved histidine is essential for glycerolipid acyltransferase catalysis.</title>
        <authorList>
            <person name="Heath R.J."/>
            <person name="Rock C.O."/>
        </authorList>
    </citation>
    <scope>MUTAGENESIS OF HIS-306 AND ASP-311</scope>
    <source>
        <strain>K12</strain>
    </source>
</reference>
<reference key="13">
    <citation type="journal article" date="1999" name="Biochemistry">
        <title>Analysis of amino acid motifs diagnostic for the sn-glycerol-3-phosphate acyltransferase reaction.</title>
        <authorList>
            <person name="Lewin T.M."/>
            <person name="Wang P."/>
            <person name="Coleman R.A."/>
        </authorList>
    </citation>
    <scope>CATALYTIC ACTIVITY</scope>
    <scope>BIOPHYSICOCHEMICAL PROPERTIES</scope>
    <scope>MUTAGENESIS OF HIS-306; SER-308; ASP-311; PHE-351; ILE-352; ARG-354; GLU-385; GLY-386; SER-389 AND PRO-421</scope>
    <source>
        <strain>K12</strain>
    </source>
</reference>
<reference key="14">
    <citation type="journal article" date="2006" name="Proteomics">
        <title>A protein network for phospholipid synthesis uncovered by a variant of the tandem affinity purification method in Escherichia coli.</title>
        <authorList>
            <person name="Gully D."/>
            <person name="Bouveret E."/>
        </authorList>
    </citation>
    <scope>SUBCELLULAR LOCATION</scope>
    <scope>INTERACTION WITH ACP; YBGC AND PSSA</scope>
    <source>
        <strain>K12 / W3110 / ATCC 27325 / DSM 5911</strain>
    </source>
</reference>
<reference key="15">
    <citation type="journal article" date="2007" name="BMC Microbiol.">
        <title>Involvement of the YneS/YgiH and PlsX proteins in phospholipid biosynthesis in both Bacillus subtilis and Escherichia coli.</title>
        <authorList>
            <person name="Yoshimura M."/>
            <person name="Oshima T."/>
            <person name="Ogasawara N."/>
        </authorList>
    </citation>
    <scope>FUNCTION IN PHOSPHOLIPID BIOSYNTHESIS</scope>
    <source>
        <strain>K12 / W3110 / ATCC 27325 / DSM 5911</strain>
    </source>
</reference>
<protein>
    <recommendedName>
        <fullName>Glycerol-3-phosphate acyltransferase</fullName>
        <shortName>GPAT</shortName>
        <ecNumber evidence="2">2.3.1.15</ecNumber>
    </recommendedName>
</protein>
<evidence type="ECO:0000269" key="1">
    <source>
    </source>
</evidence>
<evidence type="ECO:0000269" key="2">
    <source>
    </source>
</evidence>
<evidence type="ECO:0000269" key="3">
    <source>
    </source>
</evidence>
<evidence type="ECO:0000269" key="4">
    <source>
    </source>
</evidence>
<evidence type="ECO:0000269" key="5">
    <source>
    </source>
</evidence>
<evidence type="ECO:0000269" key="6">
    <source>
    </source>
</evidence>
<evidence type="ECO:0000269" key="7">
    <source>
    </source>
</evidence>
<evidence type="ECO:0000269" key="8">
    <source>
    </source>
</evidence>
<evidence type="ECO:0000305" key="9"/>
<sequence length="807" mass="91381">MSGWPRIYYKLLNLPLSILVKSKSIPADPAPELGLDTSRPIMYVLPYNSKADLLTLRAQCLAHDLPDPLEPLEIDGTLLPRYVFIHGGPRVFTYYTPKEESIKLFHDYLDLHRSNPNLDVQMVPVSVMFGRAPGREKGEVNPPLRMLNGVQKFFAVLWLGRDSFVRFSPSVSLRRMADEHGTDKTIAQKLARVARMHFARQRLAAVGPRLPARQDLFNKLLASRAIAKAVEDEARSKKISHEKAQQNAIALMEEIAANFSYEMIRLTDRILGFTWNRLYQGINVHNAERVRQLAHDGHELVYVPCHRSHMDYLLLSYVLYHQGLVPPHIAAGINLNFWPAGPIFRRLGAFFIRRTFKGNKLYSTVFREYLGELFSRGYSVEYFVEGGRSRTGRLLDPKTGTLSMTIQAMLRGGTRPITLIPIYIGYEHVMEVGTYAKELRGATKEKESLPQMLRGLSKLRNLGQGYVNFGEPMPLMTYLNQHVPDWRESIDPIEAVRPAWLTPTVNNIAADLMVRINNAGAANAMNLCCTALLASRQRSLTREQLTEQLNCYLDLMRNVPYSTDSTVPSASASELIDHALQMNKFEVEKDTIGDIIILPREQAVLMTYYRNNIAHMLVLPSLMAAIVTQHRHISRDVLMEHVNVLYPMLKAELFLRWDRDELPDVIDALANEMQRQGLITLQDDELHINPAHSRTLQLLAAGARETLQRYAITFWLLSANPSINRGTLEKESRTVAQRLSVLHGINAPEFFDKAVFSSLVLTLRDEGYISDSGDAEPAETMKVYQLLAELITSDVRLTIESATQGEG</sequence>
<feature type="initiator methionine" description="Removed">
    <location>
        <position position="1"/>
    </location>
</feature>
<feature type="chain" id="PRO_0000195218" description="Glycerol-3-phosphate acyltransferase">
    <location>
        <begin position="2"/>
        <end position="807"/>
    </location>
</feature>
<feature type="short sequence motif" description="HXXXXD motif">
    <location>
        <begin position="306"/>
        <end position="311"/>
    </location>
</feature>
<feature type="mutagenesis site" description="Abolishes acyltransferase activity." evidence="2 8">
    <original>H</original>
    <variation>A</variation>
    <location>
        <position position="306"/>
    </location>
</feature>
<feature type="mutagenesis site" description="Reduced acyltransferase activity." evidence="2 8">
    <original>H</original>
    <variation>G</variation>
    <location>
        <position position="306"/>
    </location>
</feature>
<feature type="mutagenesis site" description="No effect." evidence="2">
    <original>S</original>
    <variation>A</variation>
    <location>
        <position position="308"/>
    </location>
</feature>
<feature type="mutagenesis site" description="Prevents assembly into the membrane, suggesting that it participates in folding." evidence="2 8">
    <original>D</original>
    <variation>A</variation>
    <location>
        <position position="311"/>
    </location>
</feature>
<feature type="mutagenesis site" description="Strongly reduced acyltransferase activity." evidence="2 8">
    <original>D</original>
    <variation>G</variation>
    <location>
        <position position="311"/>
    </location>
</feature>
<feature type="mutagenesis site" description="In plsB26; results in high KM for glycerol-3-phosphate and reduced specific activity." evidence="1">
    <original>A</original>
    <variation>T</variation>
    <location>
        <position position="349"/>
    </location>
</feature>
<feature type="mutagenesis site" description="Strongly reduced acyltransferase activity." evidence="2">
    <original>F</original>
    <variation>A</variation>
    <location>
        <position position="351"/>
    </location>
</feature>
<feature type="mutagenesis site" description="Reduced acyltransferase activity." evidence="2">
    <original>I</original>
    <variation>A</variation>
    <location>
        <position position="352"/>
    </location>
</feature>
<feature type="mutagenesis site" description="Reduced acyltransferase activity." evidence="2">
    <original>R</original>
    <variation>C</variation>
    <location>
        <position position="354"/>
    </location>
</feature>
<feature type="mutagenesis site" description="No effect." evidence="2">
    <original>R</original>
    <variation>K</variation>
    <location>
        <position position="354"/>
    </location>
</feature>
<feature type="mutagenesis site" description="Strongly reduced acyltransferase activity." evidence="2">
    <original>E</original>
    <variation>R</variation>
    <location>
        <position position="385"/>
    </location>
</feature>
<feature type="mutagenesis site" description="No effect." evidence="2">
    <original>G</original>
    <variation>A</variation>
    <location>
        <position position="386"/>
    </location>
</feature>
<feature type="mutagenesis site" description="Reduced acyltransferase activity." evidence="2">
    <original>G</original>
    <variation>L</variation>
    <location>
        <position position="386"/>
    </location>
</feature>
<feature type="mutagenesis site" description="No effect." evidence="2">
    <original>S</original>
    <variation>A</variation>
    <location>
        <position position="389"/>
    </location>
</feature>
<feature type="mutagenesis site" description="Reduced acyltransferase activity." evidence="2">
    <original>P</original>
    <variation>S</variation>
    <location>
        <position position="421"/>
    </location>
</feature>
<gene>
    <name type="primary">plsB</name>
    <name type="ordered locus">b4041</name>
    <name type="ordered locus">JW4001</name>
</gene>
<keyword id="KW-0012">Acyltransferase</keyword>
<keyword id="KW-0997">Cell inner membrane</keyword>
<keyword id="KW-1003">Cell membrane</keyword>
<keyword id="KW-0903">Direct protein sequencing</keyword>
<keyword id="KW-0444">Lipid biosynthesis</keyword>
<keyword id="KW-0443">Lipid metabolism</keyword>
<keyword id="KW-0472">Membrane</keyword>
<keyword id="KW-0594">Phospholipid biosynthesis</keyword>
<keyword id="KW-1208">Phospholipid metabolism</keyword>
<keyword id="KW-1185">Reference proteome</keyword>
<keyword id="KW-0808">Transferase</keyword>
<accession>P0A7A7</accession>
<accession>P00482</accession>
<accession>Q2M6R3</accession>
<accession>Q9S683</accession>
<dbReference type="EC" id="2.3.1.15" evidence="2"/>
<dbReference type="EMBL" id="K00127">
    <property type="protein sequence ID" value="AAA24395.1"/>
    <property type="molecule type" value="Genomic_DNA"/>
</dbReference>
<dbReference type="EMBL" id="AF106625">
    <property type="protein sequence ID" value="AAD20588.1"/>
    <property type="molecule type" value="Genomic_DNA"/>
</dbReference>
<dbReference type="EMBL" id="U00006">
    <property type="protein sequence ID" value="AAC43135.1"/>
    <property type="status" value="ALT_INIT"/>
    <property type="molecule type" value="Genomic_DNA"/>
</dbReference>
<dbReference type="EMBL" id="U00096">
    <property type="protein sequence ID" value="AAC77011.2"/>
    <property type="molecule type" value="Genomic_DNA"/>
</dbReference>
<dbReference type="EMBL" id="AP009048">
    <property type="protein sequence ID" value="BAE78043.1"/>
    <property type="molecule type" value="Genomic_DNA"/>
</dbReference>
<dbReference type="EMBL" id="M93413">
    <property type="protein sequence ID" value="AAA24718.1"/>
    <property type="molecule type" value="Genomic_DNA"/>
</dbReference>
<dbReference type="EMBL" id="M93136">
    <property type="protein sequence ID" value="AAA24713.1"/>
    <property type="molecule type" value="Genomic_DNA"/>
</dbReference>
<dbReference type="PIR" id="A00565">
    <property type="entry name" value="XUECAG"/>
</dbReference>
<dbReference type="RefSeq" id="NP_418465.4">
    <property type="nucleotide sequence ID" value="NC_000913.3"/>
</dbReference>
<dbReference type="RefSeq" id="WP_000017354.1">
    <property type="nucleotide sequence ID" value="NZ_STEB01000022.1"/>
</dbReference>
<dbReference type="SMR" id="P0A7A7"/>
<dbReference type="BioGRID" id="4261720">
    <property type="interactions" value="251"/>
</dbReference>
<dbReference type="BioGRID" id="852835">
    <property type="interactions" value="1"/>
</dbReference>
<dbReference type="DIP" id="DIP-29380N"/>
<dbReference type="FunCoup" id="P0A7A7">
    <property type="interactions" value="353"/>
</dbReference>
<dbReference type="IntAct" id="P0A7A7">
    <property type="interactions" value="37"/>
</dbReference>
<dbReference type="STRING" id="511145.b4041"/>
<dbReference type="SwissLipids" id="SLP:000001804"/>
<dbReference type="jPOST" id="P0A7A7"/>
<dbReference type="PaxDb" id="511145-b4041"/>
<dbReference type="EnsemblBacteria" id="AAC77011">
    <property type="protein sequence ID" value="AAC77011"/>
    <property type="gene ID" value="b4041"/>
</dbReference>
<dbReference type="GeneID" id="75204185"/>
<dbReference type="GeneID" id="948541"/>
<dbReference type="KEGG" id="ecj:JW4001"/>
<dbReference type="KEGG" id="eco:b4041"/>
<dbReference type="KEGG" id="ecoc:C3026_21840"/>
<dbReference type="PATRIC" id="fig|511145.12.peg.4158"/>
<dbReference type="EchoBASE" id="EB0733"/>
<dbReference type="eggNOG" id="COG2937">
    <property type="taxonomic scope" value="Bacteria"/>
</dbReference>
<dbReference type="HOGENOM" id="CLU_015407_0_0_6"/>
<dbReference type="InParanoid" id="P0A7A7"/>
<dbReference type="OMA" id="EVIYVPC"/>
<dbReference type="OrthoDB" id="335193at2"/>
<dbReference type="PhylomeDB" id="P0A7A7"/>
<dbReference type="BioCyc" id="EcoCyc:GLYCEROL-3-P-ACYLTRANSFER-MONOMER"/>
<dbReference type="BioCyc" id="MetaCyc:GLYCEROL-3-P-ACYLTRANSFER-MONOMER"/>
<dbReference type="SABIO-RK" id="P0A7A7"/>
<dbReference type="UniPathway" id="UPA00557">
    <property type="reaction ID" value="UER00612"/>
</dbReference>
<dbReference type="PRO" id="PR:P0A7A7"/>
<dbReference type="Proteomes" id="UP000000625">
    <property type="component" value="Chromosome"/>
</dbReference>
<dbReference type="GO" id="GO:0005886">
    <property type="term" value="C:plasma membrane"/>
    <property type="evidence" value="ECO:0007669"/>
    <property type="project" value="UniProtKB-SubCell"/>
</dbReference>
<dbReference type="GO" id="GO:0004366">
    <property type="term" value="F:glycerol-3-phosphate O-acyltransferase activity"/>
    <property type="evidence" value="ECO:0000315"/>
    <property type="project" value="EcoliWiki"/>
</dbReference>
<dbReference type="GO" id="GO:0016024">
    <property type="term" value="P:CDP-diacylglycerol biosynthetic process"/>
    <property type="evidence" value="ECO:0007669"/>
    <property type="project" value="UniProtKB-UniRule"/>
</dbReference>
<dbReference type="GO" id="GO:0006631">
    <property type="term" value="P:fatty acid metabolic process"/>
    <property type="evidence" value="ECO:0000315"/>
    <property type="project" value="EcoliWiki"/>
</dbReference>
<dbReference type="GO" id="GO:0008654">
    <property type="term" value="P:phospholipid biosynthetic process"/>
    <property type="evidence" value="ECO:0000315"/>
    <property type="project" value="EcoliWiki"/>
</dbReference>
<dbReference type="CDD" id="cd07993">
    <property type="entry name" value="LPLAT_DHAPAT-like"/>
    <property type="match status" value="1"/>
</dbReference>
<dbReference type="HAMAP" id="MF_00393">
    <property type="entry name" value="Glyc3P_acyltrans"/>
    <property type="match status" value="1"/>
</dbReference>
<dbReference type="InterPro" id="IPR022284">
    <property type="entry name" value="GPAT/DHAPAT"/>
</dbReference>
<dbReference type="InterPro" id="IPR045520">
    <property type="entry name" value="GPAT/DHAPAT_C"/>
</dbReference>
<dbReference type="InterPro" id="IPR041728">
    <property type="entry name" value="GPAT/DHAPAT_LPLAT"/>
</dbReference>
<dbReference type="InterPro" id="IPR028354">
    <property type="entry name" value="GPAT_PlsB"/>
</dbReference>
<dbReference type="InterPro" id="IPR002123">
    <property type="entry name" value="Plipid/glycerol_acylTrfase"/>
</dbReference>
<dbReference type="NCBIfam" id="TIGR03703">
    <property type="entry name" value="plsB"/>
    <property type="match status" value="1"/>
</dbReference>
<dbReference type="NCBIfam" id="NF003441">
    <property type="entry name" value="PRK04974.1"/>
    <property type="match status" value="1"/>
</dbReference>
<dbReference type="PANTHER" id="PTHR12563:SF17">
    <property type="entry name" value="DIHYDROXYACETONE PHOSPHATE ACYLTRANSFERASE"/>
    <property type="match status" value="1"/>
</dbReference>
<dbReference type="PANTHER" id="PTHR12563">
    <property type="entry name" value="GLYCEROL-3-PHOSPHATE ACYLTRANSFERASE"/>
    <property type="match status" value="1"/>
</dbReference>
<dbReference type="Pfam" id="PF01553">
    <property type="entry name" value="Acyltransferase"/>
    <property type="match status" value="1"/>
</dbReference>
<dbReference type="Pfam" id="PF19277">
    <property type="entry name" value="GPAT_C"/>
    <property type="match status" value="1"/>
</dbReference>
<dbReference type="PIRSF" id="PIRSF500064">
    <property type="entry name" value="GPAT"/>
    <property type="match status" value="1"/>
</dbReference>
<dbReference type="PIRSF" id="PIRSF000437">
    <property type="entry name" value="GPAT_DHAPAT"/>
    <property type="match status" value="1"/>
</dbReference>
<dbReference type="SMART" id="SM00563">
    <property type="entry name" value="PlsC"/>
    <property type="match status" value="1"/>
</dbReference>
<dbReference type="SUPFAM" id="SSF69593">
    <property type="entry name" value="Glycerol-3-phosphate (1)-acyltransferase"/>
    <property type="match status" value="1"/>
</dbReference>